<reference key="1">
    <citation type="journal article" date="1997" name="J. Biol. Chem.">
        <title>Expression cloning of PIG-L, a candidate N-acetylglucosaminyl-phosphatidylinositol deacetylase.</title>
        <authorList>
            <person name="Nakamura N."/>
            <person name="Inoue N."/>
            <person name="Watanabe R."/>
            <person name="Takahashi M."/>
            <person name="Takeda J."/>
            <person name="Stevens V.L."/>
            <person name="Kinoshita T."/>
        </authorList>
    </citation>
    <scope>NUCLEOTIDE SEQUENCE [MRNA]</scope>
    <scope>FUNCTION</scope>
    <scope>SUBCELLULAR LOCATION</scope>
    <scope>TOPOLOGY</scope>
    <source>
        <tissue>Glial tumor</tissue>
    </source>
</reference>
<reference key="2">
    <citation type="journal article" date="2004" name="Genome Res.">
        <title>The status, quality, and expansion of the NIH full-length cDNA project: the Mammalian Gene Collection (MGC).</title>
        <authorList>
            <consortium name="The MGC Project Team"/>
        </authorList>
    </citation>
    <scope>NUCLEOTIDE SEQUENCE [LARGE SCALE MRNA]</scope>
    <source>
        <tissue>Heart</tissue>
    </source>
</reference>
<reference key="3">
    <citation type="journal article" date="1999" name="Biochem. J.">
        <title>Mammalian PIG-L and its yeast homologue Gpi12p are N-acetylglucosaminylphosphatidylinositol de-N-acetylases essential in glycosylphosphatidylinositol biosynthesis.</title>
        <authorList>
            <person name="Watanabe R."/>
            <person name="Ohishi K."/>
            <person name="Maeda Y."/>
            <person name="Nakamura N."/>
            <person name="Kinoshita T."/>
        </authorList>
    </citation>
    <scope>FUNCTION</scope>
    <scope>CATALYTIC ACTIVITY</scope>
</reference>
<gene>
    <name type="primary">Pigl</name>
</gene>
<feature type="chain" id="PRO_0000207168" description="N-acetylglucosaminyl-phosphatidylinositol de-N-acetylase">
    <location>
        <begin position="1"/>
        <end position="252"/>
    </location>
</feature>
<feature type="transmembrane region" description="Helical" evidence="2">
    <location>
        <begin position="2"/>
        <end position="22"/>
    </location>
</feature>
<feature type="topological domain" description="Cytoplasmic" evidence="4">
    <location>
        <begin position="23"/>
        <end position="252"/>
    </location>
</feature>
<accession>O35790</accession>
<evidence type="ECO:0000250" key="1">
    <source>
        <dbReference type="UniProtKB" id="Q9Y2B2"/>
    </source>
</evidence>
<evidence type="ECO:0000255" key="2"/>
<evidence type="ECO:0000269" key="3">
    <source>
    </source>
</evidence>
<evidence type="ECO:0000269" key="4">
    <source>
    </source>
</evidence>
<evidence type="ECO:0000303" key="5">
    <source>
    </source>
</evidence>
<evidence type="ECO:0000305" key="6"/>
<evidence type="ECO:0000305" key="7">
    <source>
    </source>
</evidence>
<comment type="function">
    <text evidence="3 4">Catalyzes the second step of glycosylphosphatidylinositol (GPI) biosynthesis, which is the de-N-acetylation of N-acetylglucosaminyl-phosphatidylinositol.</text>
</comment>
<comment type="catalytic activity">
    <reaction evidence="3">
        <text>a 6-(N-acetyl-alpha-D-glucosaminyl)-1-(1,2-diacyl-sn-glycero-3-phospho)-1D-myo-inositol + H2O = a 6-(alpha-D-glucosaminyl)-1-(1,2-diacyl-sn-glycero-3-phospho)-1D-myo-inositol + acetate</text>
        <dbReference type="Rhea" id="RHEA:11660"/>
        <dbReference type="ChEBI" id="CHEBI:15377"/>
        <dbReference type="ChEBI" id="CHEBI:30089"/>
        <dbReference type="ChEBI" id="CHEBI:57265"/>
        <dbReference type="ChEBI" id="CHEBI:57997"/>
        <dbReference type="EC" id="3.5.1.89"/>
    </reaction>
    <physiologicalReaction direction="left-to-right" evidence="7">
        <dbReference type="Rhea" id="RHEA:11661"/>
    </physiologicalReaction>
</comment>
<comment type="pathway">
    <text evidence="3 4">Glycolipid biosynthesis; glycosylphosphatidylinositol-anchor biosynthesis.</text>
</comment>
<comment type="subcellular location">
    <subcellularLocation>
        <location evidence="4">Endoplasmic reticulum membrane</location>
        <topology evidence="4">Single-pass type I membrane protein</topology>
    </subcellularLocation>
</comment>
<comment type="domain">
    <text evidence="1">Retained in the ER by two retention signals, one located in cytoplasmic domain, and a second signal in transmembrane domain that is functional in the presence of membrane proximal residues of the cytoplasmic tail.</text>
</comment>
<comment type="similarity">
    <text evidence="6">Belongs to the PIGL family.</text>
</comment>
<protein>
    <recommendedName>
        <fullName>N-acetylglucosaminyl-phosphatidylinositol de-N-acetylase</fullName>
        <ecNumber evidence="3">3.5.1.89</ecNumber>
    </recommendedName>
    <alternativeName>
        <fullName evidence="5">Phosphatidylinositol-glycan biosynthesis class L protein</fullName>
        <shortName evidence="5">PIG-L</shortName>
    </alternativeName>
</protein>
<organism>
    <name type="scientific">Rattus norvegicus</name>
    <name type="common">Rat</name>
    <dbReference type="NCBI Taxonomy" id="10116"/>
    <lineage>
        <taxon>Eukaryota</taxon>
        <taxon>Metazoa</taxon>
        <taxon>Chordata</taxon>
        <taxon>Craniata</taxon>
        <taxon>Vertebrata</taxon>
        <taxon>Euteleostomi</taxon>
        <taxon>Mammalia</taxon>
        <taxon>Eutheria</taxon>
        <taxon>Euarchontoglires</taxon>
        <taxon>Glires</taxon>
        <taxon>Rodentia</taxon>
        <taxon>Myomorpha</taxon>
        <taxon>Muroidea</taxon>
        <taxon>Muridae</taxon>
        <taxon>Murinae</taxon>
        <taxon>Rattus</taxon>
    </lineage>
</organism>
<proteinExistence type="evidence at protein level"/>
<sequence>MEVVGLLCVAVAVLTWGFLRVWNSAERMRSPEQAGLPGAGSRALVVIAHPDDEAMFFAPTILGLARLKQQVSLLCFSSGNYYNQGEIRKKELLQSCAVLGIPPSRVMIIDKREFPDDPEVQWDTEHVASTILQHIHANATDLVVTFDAEGVSGHSNHIALYKAVRALHSGGKLPEGCSVLTLQSVNVLRKYVFLLDLPWTLLSPQGVLFVLTSKEVAQAKKAMSCHRSQLLWFRHLYTVFSRYMSVNSLQLL</sequence>
<dbReference type="EC" id="3.5.1.89" evidence="3"/>
<dbReference type="EMBL" id="D88364">
    <property type="protein sequence ID" value="BAA20869.1"/>
    <property type="molecule type" value="mRNA"/>
</dbReference>
<dbReference type="EMBL" id="BC074020">
    <property type="protein sequence ID" value="AAH74020.1"/>
    <property type="molecule type" value="mRNA"/>
</dbReference>
<dbReference type="RefSeq" id="NP_620256.1">
    <property type="nucleotide sequence ID" value="NM_138901.2"/>
</dbReference>
<dbReference type="SMR" id="O35790"/>
<dbReference type="FunCoup" id="O35790">
    <property type="interactions" value="2802"/>
</dbReference>
<dbReference type="STRING" id="10116.ENSRNOP00000004113"/>
<dbReference type="SwissLipids" id="SLP:000001963"/>
<dbReference type="PhosphoSitePlus" id="O35790"/>
<dbReference type="PaxDb" id="10116-ENSRNOP00000004113"/>
<dbReference type="Ensembl" id="ENSRNOT00000004113.5">
    <property type="protein sequence ID" value="ENSRNOP00000004113.3"/>
    <property type="gene ID" value="ENSRNOG00000003070.5"/>
</dbReference>
<dbReference type="GeneID" id="192263"/>
<dbReference type="KEGG" id="rno:192263"/>
<dbReference type="UCSC" id="RGD:620437">
    <property type="organism name" value="rat"/>
</dbReference>
<dbReference type="AGR" id="RGD:620437"/>
<dbReference type="CTD" id="9487"/>
<dbReference type="RGD" id="620437">
    <property type="gene designation" value="Pigl"/>
</dbReference>
<dbReference type="eggNOG" id="KOG3332">
    <property type="taxonomic scope" value="Eukaryota"/>
</dbReference>
<dbReference type="GeneTree" id="ENSGT00390000018434"/>
<dbReference type="HOGENOM" id="CLU_034979_1_0_1"/>
<dbReference type="InParanoid" id="O35790"/>
<dbReference type="OMA" id="YVLESVN"/>
<dbReference type="OrthoDB" id="440160at2759"/>
<dbReference type="PhylomeDB" id="O35790"/>
<dbReference type="TreeFam" id="TF315150"/>
<dbReference type="BRENDA" id="3.5.1.89">
    <property type="organism ID" value="5301"/>
</dbReference>
<dbReference type="Reactome" id="R-RNO-162710">
    <property type="pathway name" value="Synthesis of glycosylphosphatidylinositol (GPI)"/>
</dbReference>
<dbReference type="UniPathway" id="UPA00196"/>
<dbReference type="PRO" id="PR:O35790"/>
<dbReference type="Proteomes" id="UP000002494">
    <property type="component" value="Chromosome 10"/>
</dbReference>
<dbReference type="Bgee" id="ENSRNOG00000003070">
    <property type="expression patterns" value="Expressed in pancreas and 20 other cell types or tissues"/>
</dbReference>
<dbReference type="GO" id="GO:0005783">
    <property type="term" value="C:endoplasmic reticulum"/>
    <property type="evidence" value="ECO:0000318"/>
    <property type="project" value="GO_Central"/>
</dbReference>
<dbReference type="GO" id="GO:0005789">
    <property type="term" value="C:endoplasmic reticulum membrane"/>
    <property type="evidence" value="ECO:0000314"/>
    <property type="project" value="UniProtKB"/>
</dbReference>
<dbReference type="GO" id="GO:0000225">
    <property type="term" value="F:N-acetylglucosaminylphosphatidylinositol deacetylase activity"/>
    <property type="evidence" value="ECO:0000314"/>
    <property type="project" value="UniProtKB"/>
</dbReference>
<dbReference type="GO" id="GO:0006506">
    <property type="term" value="P:GPI anchor biosynthetic process"/>
    <property type="evidence" value="ECO:0000314"/>
    <property type="project" value="UniProtKB"/>
</dbReference>
<dbReference type="FunFam" id="3.40.50.10320:FF:000002">
    <property type="entry name" value="Probable N-acetylglucosaminyl-phosphatidylinositol de-N-acetylase"/>
    <property type="match status" value="1"/>
</dbReference>
<dbReference type="Gene3D" id="3.40.50.10320">
    <property type="entry name" value="LmbE-like"/>
    <property type="match status" value="1"/>
</dbReference>
<dbReference type="InterPro" id="IPR003737">
    <property type="entry name" value="GlcNAc_PI_deacetylase-related"/>
</dbReference>
<dbReference type="InterPro" id="IPR024078">
    <property type="entry name" value="LmbE-like_dom_sf"/>
</dbReference>
<dbReference type="PANTHER" id="PTHR12993:SF11">
    <property type="entry name" value="N-ACETYLGLUCOSAMINYL-PHOSPHATIDYLINOSITOL DE-N-ACETYLASE"/>
    <property type="match status" value="1"/>
</dbReference>
<dbReference type="PANTHER" id="PTHR12993">
    <property type="entry name" value="N-ACETYLGLUCOSAMINYL-PHOSPHATIDYLINOSITOL DE-N-ACETYLASE-RELATED"/>
    <property type="match status" value="1"/>
</dbReference>
<dbReference type="Pfam" id="PF02585">
    <property type="entry name" value="PIG-L"/>
    <property type="match status" value="1"/>
</dbReference>
<dbReference type="SUPFAM" id="SSF102588">
    <property type="entry name" value="LmbE-like"/>
    <property type="match status" value="1"/>
</dbReference>
<keyword id="KW-0256">Endoplasmic reticulum</keyword>
<keyword id="KW-0337">GPI-anchor biosynthesis</keyword>
<keyword id="KW-0378">Hydrolase</keyword>
<keyword id="KW-0443">Lipid metabolism</keyword>
<keyword id="KW-0472">Membrane</keyword>
<keyword id="KW-1185">Reference proteome</keyword>
<keyword id="KW-0812">Transmembrane</keyword>
<keyword id="KW-1133">Transmembrane helix</keyword>
<name>PIGL_RAT</name>